<dbReference type="EC" id="2.4.1.21"/>
<dbReference type="EMBL" id="AF033856">
    <property type="protein sequence ID" value="AAD03474.1"/>
    <property type="molecule type" value="Genomic_DNA"/>
</dbReference>
<dbReference type="PDB" id="1RZU">
    <property type="method" value="X-ray"/>
    <property type="resolution" value="2.30 A"/>
    <property type="chains" value="A/B=1-480"/>
</dbReference>
<dbReference type="PDB" id="1RZV">
    <property type="method" value="X-ray"/>
    <property type="resolution" value="2.30 A"/>
    <property type="chains" value="A/B=1-480"/>
</dbReference>
<dbReference type="PDBsum" id="1RZU"/>
<dbReference type="PDBsum" id="1RZV"/>
<dbReference type="SMR" id="P0A3F3"/>
<dbReference type="CAZy" id="GT5">
    <property type="family name" value="Glycosyltransferase Family 5"/>
</dbReference>
<dbReference type="DNASU" id="1135949"/>
<dbReference type="eggNOG" id="COG0297">
    <property type="taxonomic scope" value="Bacteria"/>
</dbReference>
<dbReference type="UniPathway" id="UPA00164"/>
<dbReference type="EvolutionaryTrace" id="P0A3F3"/>
<dbReference type="GO" id="GO:0005829">
    <property type="term" value="C:cytosol"/>
    <property type="evidence" value="ECO:0007669"/>
    <property type="project" value="TreeGrafter"/>
</dbReference>
<dbReference type="GO" id="GO:0009011">
    <property type="term" value="F:alpha-1,4-glucan glucosyltransferase (ADP-glucose donor) activity"/>
    <property type="evidence" value="ECO:0007669"/>
    <property type="project" value="UniProtKB-UniRule"/>
</dbReference>
<dbReference type="GO" id="GO:0004373">
    <property type="term" value="F:alpha-1,4-glucan glucosyltransferase (UDP-glucose donor) activity"/>
    <property type="evidence" value="ECO:0007669"/>
    <property type="project" value="InterPro"/>
</dbReference>
<dbReference type="GO" id="GO:0005978">
    <property type="term" value="P:glycogen biosynthetic process"/>
    <property type="evidence" value="ECO:0007669"/>
    <property type="project" value="UniProtKB-UniRule"/>
</dbReference>
<dbReference type="CDD" id="cd03791">
    <property type="entry name" value="GT5_Glycogen_synthase_DULL1-like"/>
    <property type="match status" value="1"/>
</dbReference>
<dbReference type="Gene3D" id="3.40.50.2000">
    <property type="entry name" value="Glycogen Phosphorylase B"/>
    <property type="match status" value="2"/>
</dbReference>
<dbReference type="HAMAP" id="MF_00484">
    <property type="entry name" value="Glycogen_synth"/>
    <property type="match status" value="1"/>
</dbReference>
<dbReference type="InterPro" id="IPR001296">
    <property type="entry name" value="Glyco_trans_1"/>
</dbReference>
<dbReference type="InterPro" id="IPR011835">
    <property type="entry name" value="GS/SS"/>
</dbReference>
<dbReference type="InterPro" id="IPR013534">
    <property type="entry name" value="Starch_synth_cat_dom"/>
</dbReference>
<dbReference type="NCBIfam" id="TIGR02095">
    <property type="entry name" value="glgA"/>
    <property type="match status" value="1"/>
</dbReference>
<dbReference type="NCBIfam" id="NF001899">
    <property type="entry name" value="PRK00654.1-2"/>
    <property type="match status" value="1"/>
</dbReference>
<dbReference type="PANTHER" id="PTHR45825:SF11">
    <property type="entry name" value="ALPHA AMYLASE DOMAIN-CONTAINING PROTEIN"/>
    <property type="match status" value="1"/>
</dbReference>
<dbReference type="PANTHER" id="PTHR45825">
    <property type="entry name" value="GRANULE-BOUND STARCH SYNTHASE 1, CHLOROPLASTIC/AMYLOPLASTIC"/>
    <property type="match status" value="1"/>
</dbReference>
<dbReference type="Pfam" id="PF08323">
    <property type="entry name" value="Glyco_transf_5"/>
    <property type="match status" value="1"/>
</dbReference>
<dbReference type="Pfam" id="PF00534">
    <property type="entry name" value="Glycos_transf_1"/>
    <property type="match status" value="1"/>
</dbReference>
<dbReference type="SUPFAM" id="SSF53756">
    <property type="entry name" value="UDP-Glycosyltransferase/glycogen phosphorylase"/>
    <property type="match status" value="1"/>
</dbReference>
<name>GLGA1_RHIRD</name>
<proteinExistence type="evidence at protein level"/>
<keyword id="KW-0002">3D-structure</keyword>
<keyword id="KW-0320">Glycogen biosynthesis</keyword>
<keyword id="KW-0328">Glycosyltransferase</keyword>
<keyword id="KW-0808">Transferase</keyword>
<organism>
    <name type="scientific">Rhizobium radiobacter</name>
    <name type="common">Agrobacterium tumefaciens</name>
    <name type="synonym">Agrobacterium radiobacter</name>
    <dbReference type="NCBI Taxonomy" id="358"/>
    <lineage>
        <taxon>Bacteria</taxon>
        <taxon>Pseudomonadati</taxon>
        <taxon>Pseudomonadota</taxon>
        <taxon>Alphaproteobacteria</taxon>
        <taxon>Hyphomicrobiales</taxon>
        <taxon>Rhizobiaceae</taxon>
        <taxon>Rhizobium/Agrobacterium group</taxon>
        <taxon>Agrobacterium</taxon>
        <taxon>Agrobacterium tumefaciens complex</taxon>
    </lineage>
</organism>
<gene>
    <name type="primary">glgA1</name>
    <name type="synonym">glgA</name>
</gene>
<feature type="chain" id="PRO_0000188586" description="Glycogen synthase 1">
    <location>
        <begin position="1"/>
        <end position="480"/>
    </location>
</feature>
<feature type="binding site" evidence="1">
    <location>
        <position position="15"/>
    </location>
    <ligand>
        <name>ADP-alpha-D-glucose</name>
        <dbReference type="ChEBI" id="CHEBI:57498"/>
    </ligand>
</feature>
<feature type="strand" evidence="3">
    <location>
        <begin position="2"/>
        <end position="6"/>
    </location>
</feature>
<feature type="turn" evidence="3">
    <location>
        <begin position="11"/>
        <end position="13"/>
    </location>
</feature>
<feature type="helix" evidence="3">
    <location>
        <begin position="18"/>
        <end position="31"/>
    </location>
</feature>
<feature type="turn" evidence="3">
    <location>
        <begin position="32"/>
        <end position="34"/>
    </location>
</feature>
<feature type="strand" evidence="3">
    <location>
        <begin position="36"/>
        <end position="42"/>
    </location>
</feature>
<feature type="helix" evidence="3">
    <location>
        <begin position="45"/>
        <end position="50"/>
    </location>
</feature>
<feature type="strand" evidence="3">
    <location>
        <begin position="55"/>
        <end position="61"/>
    </location>
</feature>
<feature type="strand" evidence="3">
    <location>
        <begin position="63"/>
        <end position="65"/>
    </location>
</feature>
<feature type="strand" evidence="3">
    <location>
        <begin position="68"/>
        <end position="75"/>
    </location>
</feature>
<feature type="strand" evidence="3">
    <location>
        <begin position="78"/>
        <end position="84"/>
    </location>
</feature>
<feature type="helix" evidence="3">
    <location>
        <begin position="86"/>
        <end position="89"/>
    </location>
</feature>
<feature type="strand" evidence="3">
    <location>
        <begin position="91"/>
        <end position="93"/>
    </location>
</feature>
<feature type="strand" evidence="3">
    <location>
        <begin position="95"/>
        <end position="97"/>
    </location>
</feature>
<feature type="strand" evidence="3">
    <location>
        <begin position="101"/>
        <end position="103"/>
    </location>
</feature>
<feature type="helix" evidence="3">
    <location>
        <begin position="107"/>
        <end position="122"/>
    </location>
</feature>
<feature type="strand" evidence="3">
    <location>
        <begin position="126"/>
        <end position="128"/>
    </location>
</feature>
<feature type="strand" evidence="3">
    <location>
        <begin position="132"/>
        <end position="137"/>
    </location>
</feature>
<feature type="helix" evidence="3">
    <location>
        <begin position="138"/>
        <end position="141"/>
    </location>
</feature>
<feature type="helix" evidence="3">
    <location>
        <begin position="144"/>
        <end position="150"/>
    </location>
</feature>
<feature type="strand" evidence="3">
    <location>
        <begin position="151"/>
        <end position="153"/>
    </location>
</feature>
<feature type="strand" evidence="3">
    <location>
        <begin position="158"/>
        <end position="163"/>
    </location>
</feature>
<feature type="helix" evidence="3">
    <location>
        <begin position="173"/>
        <end position="178"/>
    </location>
</feature>
<feature type="helix" evidence="3">
    <location>
        <begin position="183"/>
        <end position="185"/>
    </location>
</feature>
<feature type="turn" evidence="3">
    <location>
        <begin position="188"/>
        <end position="191"/>
    </location>
</feature>
<feature type="strand" evidence="3">
    <location>
        <begin position="196"/>
        <end position="198"/>
    </location>
</feature>
<feature type="helix" evidence="3">
    <location>
        <begin position="199"/>
        <end position="206"/>
    </location>
</feature>
<feature type="strand" evidence="3">
    <location>
        <begin position="208"/>
        <end position="213"/>
    </location>
</feature>
<feature type="helix" evidence="3">
    <location>
        <begin position="215"/>
        <end position="220"/>
    </location>
</feature>
<feature type="helix" evidence="3">
    <location>
        <begin position="224"/>
        <end position="227"/>
    </location>
</feature>
<feature type="helix" evidence="3">
    <location>
        <begin position="231"/>
        <end position="235"/>
    </location>
</feature>
<feature type="helix" evidence="3">
    <location>
        <begin position="236"/>
        <end position="240"/>
    </location>
</feature>
<feature type="strand" evidence="3">
    <location>
        <begin position="241"/>
        <end position="243"/>
    </location>
</feature>
<feature type="turn" evidence="3">
    <location>
        <begin position="250"/>
        <end position="252"/>
    </location>
</feature>
<feature type="turn" evidence="3">
    <location>
        <begin position="255"/>
        <end position="257"/>
    </location>
</feature>
<feature type="strand" evidence="3">
    <location>
        <begin position="261"/>
        <end position="263"/>
    </location>
</feature>
<feature type="helix" evidence="4">
    <location>
        <begin position="267"/>
        <end position="272"/>
    </location>
</feature>
<feature type="helix" evidence="3">
    <location>
        <begin position="273"/>
        <end position="284"/>
    </location>
</feature>
<feature type="strand" evidence="3">
    <location>
        <begin position="289"/>
        <end position="291"/>
    </location>
</feature>
<feature type="strand" evidence="3">
    <location>
        <begin position="293"/>
        <end position="298"/>
    </location>
</feature>
<feature type="turn" evidence="3">
    <location>
        <begin position="302"/>
        <end position="305"/>
    </location>
</feature>
<feature type="helix" evidence="3">
    <location>
        <begin position="306"/>
        <end position="310"/>
    </location>
</feature>
<feature type="helix" evidence="3">
    <location>
        <begin position="313"/>
        <end position="318"/>
    </location>
</feature>
<feature type="strand" evidence="3">
    <location>
        <begin position="322"/>
        <end position="327"/>
    </location>
</feature>
<feature type="helix" evidence="3">
    <location>
        <begin position="331"/>
        <end position="343"/>
    </location>
</feature>
<feature type="turn" evidence="3">
    <location>
        <begin position="344"/>
        <end position="347"/>
    </location>
</feature>
<feature type="strand" evidence="3">
    <location>
        <begin position="348"/>
        <end position="353"/>
    </location>
</feature>
<feature type="helix" evidence="3">
    <location>
        <begin position="356"/>
        <end position="365"/>
    </location>
</feature>
<feature type="strand" evidence="3">
    <location>
        <begin position="367"/>
        <end position="371"/>
    </location>
</feature>
<feature type="helix" evidence="3">
    <location>
        <begin position="381"/>
        <end position="388"/>
    </location>
</feature>
<feature type="strand" evidence="3">
    <location>
        <begin position="391"/>
        <end position="397"/>
    </location>
</feature>
<feature type="helix" evidence="3">
    <location>
        <begin position="398"/>
        <end position="403"/>
    </location>
</feature>
<feature type="helix" evidence="3">
    <location>
        <begin position="409"/>
        <end position="413"/>
    </location>
</feature>
<feature type="strand" evidence="3">
    <location>
        <begin position="419"/>
        <end position="424"/>
    </location>
</feature>
<feature type="helix" evidence="3">
    <location>
        <begin position="427"/>
        <end position="441"/>
    </location>
</feature>
<feature type="helix" evidence="3">
    <location>
        <begin position="444"/>
        <end position="455"/>
    </location>
</feature>
<feature type="helix" evidence="3">
    <location>
        <begin position="461"/>
        <end position="475"/>
    </location>
</feature>
<protein>
    <recommendedName>
        <fullName>Glycogen synthase 1</fullName>
        <ecNumber>2.4.1.21</ecNumber>
    </recommendedName>
    <alternativeName>
        <fullName>Starch [bacterial glycogen] synthase 1</fullName>
    </alternativeName>
</protein>
<evidence type="ECO:0000250" key="1"/>
<evidence type="ECO:0000305" key="2"/>
<evidence type="ECO:0007829" key="3">
    <source>
        <dbReference type="PDB" id="1RZU"/>
    </source>
</evidence>
<evidence type="ECO:0007829" key="4">
    <source>
        <dbReference type="PDB" id="1RZV"/>
    </source>
</evidence>
<comment type="function">
    <text evidence="1">Synthesizes alpha-1,4-glucan chains using ADP-glucose.</text>
</comment>
<comment type="catalytic activity">
    <reaction>
        <text>[(1-&gt;4)-alpha-D-glucosyl](n) + ADP-alpha-D-glucose = [(1-&gt;4)-alpha-D-glucosyl](n+1) + ADP + H(+)</text>
        <dbReference type="Rhea" id="RHEA:18189"/>
        <dbReference type="Rhea" id="RHEA-COMP:9584"/>
        <dbReference type="Rhea" id="RHEA-COMP:9587"/>
        <dbReference type="ChEBI" id="CHEBI:15378"/>
        <dbReference type="ChEBI" id="CHEBI:15444"/>
        <dbReference type="ChEBI" id="CHEBI:57498"/>
        <dbReference type="ChEBI" id="CHEBI:456216"/>
        <dbReference type="EC" id="2.4.1.21"/>
    </reaction>
</comment>
<comment type="pathway">
    <text>Glycan biosynthesis; glycogen biosynthesis.</text>
</comment>
<comment type="similarity">
    <text evidence="2">Belongs to the glycosyltransferase 1 family. Bacterial/plant glycogen synthase subfamily.</text>
</comment>
<accession>P0A3F3</accession>
<accession>P39670</accession>
<sequence length="480" mass="51709">MNVLSVSSEIYPLIKTGGLADVVGALPIALEAHGVRTRTLIPGYPAVKAAVTDPVKCFEFTDLLGEKADLLEVQHERLDLLILDAPAYYERSGGPYLGQTGKDYPDNWKRFAALSLAAARIGAGVLPGWRPDMVHAHDWQAAMTPVYMRYAETPEIPSLLTIHNIAFQGQFGANIFSKLALPAHAFGMEGIEYYNDVSFLKGGLQTATALSTVSPSYAEEILTAEFGMGLEGVIGSRAHVLHGIVNGIDADVWNPATDHLIHDNYSAANLKNRALNKKAVAEHFRIDDDGSPLFCVISRLTWQKGIDLMAEAVDEIVSLGGRLVVLGAGDVALEGALLAAASRHHGRVGVAIGYNEPLSHLMQAGCDAIIIPSRFEPCGLTQLYALRYGCIPVVARTGGLADTVIDANHAALASKAATGVQFSPVTLDGLKQAIRRTVRYYHDPKLWTQMQKLGMKSDVSWEKSAGLYAALYSQLISKGH</sequence>
<reference key="1">
    <citation type="journal article" date="1994" name="Gene">
        <title>A chromosomal cluster of genes encoding ADP-glucose synthetase, glycogen synthase and phosphoglucomutase in Agrobacterium tumefaciens.</title>
        <authorList>
            <person name="Uttaro A.D."/>
            <person name="Ugalde R.A."/>
        </authorList>
    </citation>
    <scope>NUCLEOTIDE SEQUENCE [GENOMIC DNA]</scope>
    <source>
        <strain>A348</strain>
    </source>
</reference>